<name>RL7_BORPE</name>
<feature type="chain" id="PRO_0000243397" description="Large ribosomal subunit protein bL12">
    <location>
        <begin position="1"/>
        <end position="127"/>
    </location>
</feature>
<protein>
    <recommendedName>
        <fullName evidence="1">Large ribosomal subunit protein bL12</fullName>
    </recommendedName>
    <alternativeName>
        <fullName evidence="2">50S ribosomal protein L7/L12</fullName>
    </alternativeName>
</protein>
<proteinExistence type="inferred from homology"/>
<evidence type="ECO:0000255" key="1">
    <source>
        <dbReference type="HAMAP-Rule" id="MF_00368"/>
    </source>
</evidence>
<evidence type="ECO:0000305" key="2"/>
<sequence>MALSKAEILDAIAGMSVLELSELIKEMEEKFGVSAAAAAVAVAAPAAGGAGAAAAEEQTEFTVVLLEAGANKVSVIKAVRELTGLGLKEAKDLVDGAPKPVKEALPKADAEAAKKKLEEAGAKVEVK</sequence>
<accession>Q7W0S0</accession>
<dbReference type="EMBL" id="BX640411">
    <property type="protein sequence ID" value="CAE40393.1"/>
    <property type="molecule type" value="Genomic_DNA"/>
</dbReference>
<dbReference type="RefSeq" id="NP_878931.1">
    <property type="nucleotide sequence ID" value="NC_002929.2"/>
</dbReference>
<dbReference type="RefSeq" id="WP_003806889.1">
    <property type="nucleotide sequence ID" value="NZ_CP039022.1"/>
</dbReference>
<dbReference type="SMR" id="Q7W0S0"/>
<dbReference type="STRING" id="257313.BP0014"/>
<dbReference type="PaxDb" id="257313-BP0014"/>
<dbReference type="GeneID" id="93206242"/>
<dbReference type="KEGG" id="bpe:BP0014"/>
<dbReference type="PATRIC" id="fig|257313.5.peg.14"/>
<dbReference type="eggNOG" id="COG0222">
    <property type="taxonomic scope" value="Bacteria"/>
</dbReference>
<dbReference type="HOGENOM" id="CLU_086499_3_2_4"/>
<dbReference type="Proteomes" id="UP000002676">
    <property type="component" value="Chromosome"/>
</dbReference>
<dbReference type="GO" id="GO:0022625">
    <property type="term" value="C:cytosolic large ribosomal subunit"/>
    <property type="evidence" value="ECO:0007669"/>
    <property type="project" value="TreeGrafter"/>
</dbReference>
<dbReference type="GO" id="GO:0003729">
    <property type="term" value="F:mRNA binding"/>
    <property type="evidence" value="ECO:0007669"/>
    <property type="project" value="TreeGrafter"/>
</dbReference>
<dbReference type="GO" id="GO:0003735">
    <property type="term" value="F:structural constituent of ribosome"/>
    <property type="evidence" value="ECO:0007669"/>
    <property type="project" value="InterPro"/>
</dbReference>
<dbReference type="GO" id="GO:0006412">
    <property type="term" value="P:translation"/>
    <property type="evidence" value="ECO:0007669"/>
    <property type="project" value="UniProtKB-UniRule"/>
</dbReference>
<dbReference type="CDD" id="cd00387">
    <property type="entry name" value="Ribosomal_L7_L12"/>
    <property type="match status" value="1"/>
</dbReference>
<dbReference type="FunFam" id="3.30.1390.10:FF:000001">
    <property type="entry name" value="50S ribosomal protein L7/L12"/>
    <property type="match status" value="1"/>
</dbReference>
<dbReference type="Gene3D" id="3.30.1390.10">
    <property type="match status" value="1"/>
</dbReference>
<dbReference type="Gene3D" id="1.20.5.710">
    <property type="entry name" value="Single helix bin"/>
    <property type="match status" value="1"/>
</dbReference>
<dbReference type="HAMAP" id="MF_00368">
    <property type="entry name" value="Ribosomal_bL12"/>
    <property type="match status" value="1"/>
</dbReference>
<dbReference type="InterPro" id="IPR000206">
    <property type="entry name" value="Ribosomal_bL12"/>
</dbReference>
<dbReference type="InterPro" id="IPR013823">
    <property type="entry name" value="Ribosomal_bL12_C"/>
</dbReference>
<dbReference type="InterPro" id="IPR014719">
    <property type="entry name" value="Ribosomal_bL12_C/ClpS-like"/>
</dbReference>
<dbReference type="InterPro" id="IPR008932">
    <property type="entry name" value="Ribosomal_bL12_oligo"/>
</dbReference>
<dbReference type="InterPro" id="IPR036235">
    <property type="entry name" value="Ribosomal_bL12_oligo_N_sf"/>
</dbReference>
<dbReference type="NCBIfam" id="TIGR00855">
    <property type="entry name" value="L12"/>
    <property type="match status" value="1"/>
</dbReference>
<dbReference type="PANTHER" id="PTHR45987">
    <property type="entry name" value="39S RIBOSOMAL PROTEIN L12"/>
    <property type="match status" value="1"/>
</dbReference>
<dbReference type="PANTHER" id="PTHR45987:SF4">
    <property type="entry name" value="LARGE RIBOSOMAL SUBUNIT PROTEIN BL12M"/>
    <property type="match status" value="1"/>
</dbReference>
<dbReference type="Pfam" id="PF00542">
    <property type="entry name" value="Ribosomal_L12"/>
    <property type="match status" value="1"/>
</dbReference>
<dbReference type="Pfam" id="PF16320">
    <property type="entry name" value="Ribosomal_L12_N"/>
    <property type="match status" value="1"/>
</dbReference>
<dbReference type="SUPFAM" id="SSF54736">
    <property type="entry name" value="ClpS-like"/>
    <property type="match status" value="1"/>
</dbReference>
<dbReference type="SUPFAM" id="SSF48300">
    <property type="entry name" value="Ribosomal protein L7/12, oligomerisation (N-terminal) domain"/>
    <property type="match status" value="1"/>
</dbReference>
<keyword id="KW-1185">Reference proteome</keyword>
<keyword id="KW-0687">Ribonucleoprotein</keyword>
<keyword id="KW-0689">Ribosomal protein</keyword>
<reference key="1">
    <citation type="journal article" date="2003" name="Nat. Genet.">
        <title>Comparative analysis of the genome sequences of Bordetella pertussis, Bordetella parapertussis and Bordetella bronchiseptica.</title>
        <authorList>
            <person name="Parkhill J."/>
            <person name="Sebaihia M."/>
            <person name="Preston A."/>
            <person name="Murphy L.D."/>
            <person name="Thomson N.R."/>
            <person name="Harris D.E."/>
            <person name="Holden M.T.G."/>
            <person name="Churcher C.M."/>
            <person name="Bentley S.D."/>
            <person name="Mungall K.L."/>
            <person name="Cerdeno-Tarraga A.-M."/>
            <person name="Temple L."/>
            <person name="James K.D."/>
            <person name="Harris B."/>
            <person name="Quail M.A."/>
            <person name="Achtman M."/>
            <person name="Atkin R."/>
            <person name="Baker S."/>
            <person name="Basham D."/>
            <person name="Bason N."/>
            <person name="Cherevach I."/>
            <person name="Chillingworth T."/>
            <person name="Collins M."/>
            <person name="Cronin A."/>
            <person name="Davis P."/>
            <person name="Doggett J."/>
            <person name="Feltwell T."/>
            <person name="Goble A."/>
            <person name="Hamlin N."/>
            <person name="Hauser H."/>
            <person name="Holroyd S."/>
            <person name="Jagels K."/>
            <person name="Leather S."/>
            <person name="Moule S."/>
            <person name="Norberczak H."/>
            <person name="O'Neil S."/>
            <person name="Ormond D."/>
            <person name="Price C."/>
            <person name="Rabbinowitsch E."/>
            <person name="Rutter S."/>
            <person name="Sanders M."/>
            <person name="Saunders D."/>
            <person name="Seeger K."/>
            <person name="Sharp S."/>
            <person name="Simmonds M."/>
            <person name="Skelton J."/>
            <person name="Squares R."/>
            <person name="Squares S."/>
            <person name="Stevens K."/>
            <person name="Unwin L."/>
            <person name="Whitehead S."/>
            <person name="Barrell B.G."/>
            <person name="Maskell D.J."/>
        </authorList>
    </citation>
    <scope>NUCLEOTIDE SEQUENCE [LARGE SCALE GENOMIC DNA]</scope>
    <source>
        <strain>Tohama I / ATCC BAA-589 / NCTC 13251</strain>
    </source>
</reference>
<gene>
    <name evidence="1" type="primary">rplL</name>
    <name type="ordered locus">BP0014</name>
</gene>
<comment type="function">
    <text evidence="1">Forms part of the ribosomal stalk which helps the ribosome interact with GTP-bound translation factors. Is thus essential for accurate translation.</text>
</comment>
<comment type="subunit">
    <text evidence="1">Homodimer. Part of the ribosomal stalk of the 50S ribosomal subunit. Forms a multimeric L10(L12)X complex, where L10 forms an elongated spine to which 2 to 4 L12 dimers bind in a sequential fashion. Binds GTP-bound translation factors.</text>
</comment>
<comment type="similarity">
    <text evidence="1">Belongs to the bacterial ribosomal protein bL12 family.</text>
</comment>
<organism>
    <name type="scientific">Bordetella pertussis (strain Tohama I / ATCC BAA-589 / NCTC 13251)</name>
    <dbReference type="NCBI Taxonomy" id="257313"/>
    <lineage>
        <taxon>Bacteria</taxon>
        <taxon>Pseudomonadati</taxon>
        <taxon>Pseudomonadota</taxon>
        <taxon>Betaproteobacteria</taxon>
        <taxon>Burkholderiales</taxon>
        <taxon>Alcaligenaceae</taxon>
        <taxon>Bordetella</taxon>
    </lineage>
</organism>